<protein>
    <recommendedName>
        <fullName>Breast cancer type 1 susceptibility protein homolog</fullName>
        <ecNumber evidence="2">2.3.2.27</ecNumber>
    </recommendedName>
    <alternativeName>
        <fullName evidence="9">RING-type E3 ubiquitin transferase BRCA1</fullName>
    </alternativeName>
</protein>
<proteinExistence type="evidence at transcript level"/>
<comment type="function">
    <text evidence="2">E3 ubiquitin-protein ligase that specifically mediates the formation of 'Lys-6'-linked polyubiquitin chains and plays a central role in DNA repair by facilitating cellular responses to DNA damage. It is unclear whether it also mediates the formation of other types of polyubiquitin chains. The BRCA1-BARD1 heterodimer coordinates a diverse range of cellular pathways such as DNA damage repair, ubiquitination and transcriptional regulation to maintain genomic stability. Regulates centrosomal microtubule nucleation. Required for appropriate cell cycle arrests after ionizing irradiation in both the S-phase and the G2 phase of the cell cycle. Required for FANCD2 targeting to sites of DNA damage. Inhibits lipid synthesis by binding to inactive phosphorylated ACACA and preventing its dephosphorylation. Contributes to homologous recombination repair (HRR) via its direct interaction with PALB2, fine-tunes recombinational repair partly through its modulatory role in the PALB2-dependent loading of BRCA2-RAD51 repair machinery at DNA breaks. Component of the BRCA1-RBBP8 complex which regulates CHEK1 activation and controls cell cycle G2/M checkpoints on DNA damage via BRCA1-mediated ubiquitination of RBBP8. Acts as a transcriptional activator.</text>
</comment>
<comment type="catalytic activity">
    <reaction evidence="2">
        <text>S-ubiquitinyl-[E2 ubiquitin-conjugating enzyme]-L-cysteine + [acceptor protein]-L-lysine = [E2 ubiquitin-conjugating enzyme]-L-cysteine + N(6)-ubiquitinyl-[acceptor protein]-L-lysine.</text>
        <dbReference type="EC" id="2.3.2.27"/>
    </reaction>
</comment>
<comment type="subunit">
    <text evidence="2">Heterodimer with BARD1. Part of the BRCA1-associated genome surveillance complex (BASC), which contains BRCA1, MSH2, MSH6, MLH1, ATM, BLM, PMS2 and the MRE11-RAD50-NBN protein (MRN) complex. This association could be a dynamic process changing throughout the cell cycle and within subnuclear domains. Component of the BRCA1-A complex, at least composed of BRCA1, BARD1, UIMC1/RAP80, ABRAXAS1, BRCC3/BRCC36, BABAM2 and BABAM1/NBA1. Interacts (via the BRCT domains) with ABRAXAS1 (phosphorylated form); this is important for recruitment to sites of DNA damage. Can form a heterotetramer with two molecules of ABRAXAS1 (phosphorylated form). Component of the BRCA1-RBBP8 complex. Interacts (via the BRCT domains) with RBBP8 ('Ser-327' phosphorylated form); the interaction ubiquitinates RBBP8, regulates CHEK1 activation, and involves RBBP8 in BRCA1-dependent G2/M checkpoint control on DNA damage. Associates with RNA polymerase II holoenzyme. Interacts with SMC1A, NELFB, DCLRE1C, CLSPN. CHEK1, CHEK2, BAP1, BRCC3, UBXN1 and PCLAF. Interacts (via BRCT domains) with BRIP1 (phosphorylated form). Interacts with FANCD2 (ubiquitinated form). Interacts with H2AX (phosphorylated on 'Ser-140'). Interacts (via the BRCT domains) with ACACA (phosphorylated form); the interaction prevents dephosphorylation of ACACA. Part of a BRCA complex containing BRCA1, BRCA2 and PALB2. Interacts directly with PALB2; the interaction is essential for its function in HRR. Interacts directly with BRCA2; the interaction occurs only in the presence of PALB2 which serves as the bridging protein. Interacts (via the BRCT domains) with LMO4; the interaction represses the transcriptional activity of BRCA1. Interacts (via the BRCT domains) with CCAR2 (via N-terminus); the interaction represses the transcriptional activator activity of BRCA1 (By similarity). Interacts with EXD2 (By similarity). Interacts (via C-terminus) with DHX9; this interaction is direct and links BRCA1 to the RNA polymerase II holoenzyme (By similarity). Interacts with DNA helicase ZGRF1; the interaction is increased following DNA damage induction (By similarity).</text>
</comment>
<comment type="subcellular location">
    <subcellularLocation>
        <location evidence="2">Nucleus</location>
    </subcellularLocation>
    <subcellularLocation>
        <location evidence="3">Chromosome</location>
    </subcellularLocation>
    <subcellularLocation>
        <location evidence="2">Cytoplasm</location>
    </subcellularLocation>
    <text evidence="2">Localizes at sites of DNA damage at double-strand breaks (DSBs); recruitment to DNA damage sites is mediated by the BRCA1-A complex. Translocated to the cytoplasm during UV-induced apoptosis.</text>
</comment>
<comment type="domain">
    <text evidence="2">The BRCT domains recognize and bind phosphorylated pSXXF motif on proteins. The interaction with the phosphorylated pSXXF motif of ABRAXAS1, recruits BRCA1 at DNA damage sites.</text>
</comment>
<comment type="domain">
    <text evidence="2">The RING-type zinc finger domain interacts with BAP1.</text>
</comment>
<comment type="PTM">
    <text evidence="2">Phosphorylated in response to IR, UV, and various stimuli that cause checkpoint activation, probably by ATM or ATR. Phosphorylation at Ser-988 by CHEK2 regulates mitotic spindle assembly. Phosphorylation by AURKA regulates centrosomal microtubule nucleation.</text>
</comment>
<comment type="PTM">
    <text evidence="2">Autoubiquitinated, undergoes 'Lys-6'-linked polyubiquitination. 'Lys-6'-linked polyubiquitination does not promote degradation.</text>
</comment>
<gene>
    <name type="primary">BRCA1</name>
</gene>
<reference key="1">
    <citation type="submission" date="1999-11" db="EMBL/GenBank/DDBJ databases">
        <title>Positive selection on the human BRCA1 gene may have resulted from pressure for prolonged care for infants.</title>
        <authorList>
            <person name="Takeda R."/>
            <person name="Hink R.L."/>
            <person name="Jogodka C."/>
            <person name="Walter N.A.R."/>
            <person name="Messier W."/>
        </authorList>
    </citation>
    <scope>NUCLEOTIDE SEQUENCE [MRNA]</scope>
    <scope>VARIANTS GLU-309; GLY-590; GLU-731 AND GLU-1100</scope>
    <source>
        <tissue>Blood</tissue>
    </source>
</reference>
<reference key="2">
    <citation type="journal article" date="2004" name="Hum. Mol. Genet.">
        <title>Evolution of the tumor suppressor BRCA1 locus in primates: implications for cancer predisposition.</title>
        <authorList>
            <person name="Pavlicek A."/>
            <person name="Noskov V.N."/>
            <person name="Kouprina N."/>
            <person name="Barrett J.C."/>
            <person name="Jurka J."/>
            <person name="Larionov V."/>
        </authorList>
    </citation>
    <scope>NUCLEOTIDE SEQUENCE [GENOMIC DNA]</scope>
</reference>
<reference key="3">
    <citation type="journal article" date="1998" name="Nat. Genet.">
        <title>Evolutionary sequence comparisons using high-density oligonucleotide arrays.</title>
        <authorList>
            <person name="Hacia J.G."/>
            <person name="Makalowski W."/>
            <person name="Edgemon K."/>
            <person name="Erdos M.R."/>
            <person name="Robbins C.M."/>
            <person name="Fodor S.P.A."/>
            <person name="Brody L.C."/>
            <person name="Collins F.S."/>
        </authorList>
    </citation>
    <scope>NUCLEOTIDE SEQUENCE [GENOMIC DNA] OF 225-1365</scope>
    <scope>VARIANTS GLU-731 AND GLU-1100</scope>
</reference>
<organism>
    <name type="scientific">Pan troglodytes</name>
    <name type="common">Chimpanzee</name>
    <dbReference type="NCBI Taxonomy" id="9598"/>
    <lineage>
        <taxon>Eukaryota</taxon>
        <taxon>Metazoa</taxon>
        <taxon>Chordata</taxon>
        <taxon>Craniata</taxon>
        <taxon>Vertebrata</taxon>
        <taxon>Euteleostomi</taxon>
        <taxon>Mammalia</taxon>
        <taxon>Eutheria</taxon>
        <taxon>Euarchontoglires</taxon>
        <taxon>Primates</taxon>
        <taxon>Haplorrhini</taxon>
        <taxon>Catarrhini</taxon>
        <taxon>Hominidae</taxon>
        <taxon>Pan</taxon>
    </lineage>
</organism>
<accession>Q9GKK8</accession>
<accession>O46484</accession>
<feature type="chain" id="PRO_0000055833" description="Breast cancer type 1 susceptibility protein homolog">
    <location>
        <begin position="1"/>
        <end position="1863"/>
    </location>
</feature>
<feature type="domain" description="BRCT 1" evidence="4">
    <location>
        <begin position="1642"/>
        <end position="1736"/>
    </location>
</feature>
<feature type="domain" description="BRCT 2" evidence="4">
    <location>
        <begin position="1756"/>
        <end position="1855"/>
    </location>
</feature>
<feature type="zinc finger region" description="RING-type" evidence="5">
    <location>
        <begin position="24"/>
        <end position="65"/>
    </location>
</feature>
<feature type="region of interest" description="Disordered" evidence="6">
    <location>
        <begin position="230"/>
        <end position="267"/>
    </location>
</feature>
<feature type="region of interest" description="Disordered" evidence="6">
    <location>
        <begin position="306"/>
        <end position="338"/>
    </location>
</feature>
<feature type="region of interest" description="Disordered" evidence="6">
    <location>
        <begin position="650"/>
        <end position="739"/>
    </location>
</feature>
<feature type="region of interest" description="Disordered" evidence="6">
    <location>
        <begin position="896"/>
        <end position="915"/>
    </location>
</feature>
<feature type="region of interest" description="Disordered" evidence="6">
    <location>
        <begin position="1181"/>
        <end position="1216"/>
    </location>
</feature>
<feature type="region of interest" description="Disordered" evidence="6">
    <location>
        <begin position="1322"/>
        <end position="1395"/>
    </location>
</feature>
<feature type="region of interest" description="Interaction with PALB2" evidence="1">
    <location>
        <begin position="1397"/>
        <end position="1424"/>
    </location>
</feature>
<feature type="region of interest" description="Disordered" evidence="6">
    <location>
        <begin position="1440"/>
        <end position="1505"/>
    </location>
</feature>
<feature type="region of interest" description="Disordered" evidence="6">
    <location>
        <begin position="1565"/>
        <end position="1642"/>
    </location>
</feature>
<feature type="compositionally biased region" description="Basic and acidic residues" evidence="6">
    <location>
        <begin position="248"/>
        <end position="260"/>
    </location>
</feature>
<feature type="compositionally biased region" description="Basic and acidic residues" evidence="6">
    <location>
        <begin position="327"/>
        <end position="338"/>
    </location>
</feature>
<feature type="compositionally biased region" description="Polar residues" evidence="6">
    <location>
        <begin position="705"/>
        <end position="716"/>
    </location>
</feature>
<feature type="compositionally biased region" description="Basic and acidic residues" evidence="6">
    <location>
        <begin position="727"/>
        <end position="737"/>
    </location>
</feature>
<feature type="compositionally biased region" description="Basic and acidic residues" evidence="6">
    <location>
        <begin position="900"/>
        <end position="909"/>
    </location>
</feature>
<feature type="compositionally biased region" description="Polar residues" evidence="6">
    <location>
        <begin position="1373"/>
        <end position="1395"/>
    </location>
</feature>
<feature type="compositionally biased region" description="Polar residues" evidence="6">
    <location>
        <begin position="1444"/>
        <end position="1470"/>
    </location>
</feature>
<feature type="compositionally biased region" description="Polar residues" evidence="6">
    <location>
        <begin position="1610"/>
        <end position="1624"/>
    </location>
</feature>
<feature type="modified residue" description="N-acetylmethionine" evidence="2">
    <location>
        <position position="1"/>
    </location>
</feature>
<feature type="modified residue" description="Phosphoserine" evidence="2">
    <location>
        <position position="114"/>
    </location>
</feature>
<feature type="modified residue" description="Phosphoserine" evidence="2">
    <location>
        <position position="395"/>
    </location>
</feature>
<feature type="modified residue" description="Phosphoserine" evidence="2">
    <location>
        <position position="398"/>
    </location>
</feature>
<feature type="modified residue" description="Phosphoserine" evidence="2">
    <location>
        <position position="423"/>
    </location>
</feature>
<feature type="modified residue" description="Phosphoserine" evidence="2">
    <location>
        <position position="434"/>
    </location>
</feature>
<feature type="modified residue" description="Phosphoserine" evidence="2">
    <location>
        <position position="551"/>
    </location>
</feature>
<feature type="modified residue" description="Phosphoserine" evidence="2">
    <location>
        <position position="694"/>
    </location>
</feature>
<feature type="modified residue" description="Phosphoserine" evidence="2">
    <location>
        <position position="708"/>
    </location>
</feature>
<feature type="modified residue" description="Phosphoserine" evidence="3">
    <location>
        <position position="725"/>
    </location>
</feature>
<feature type="modified residue" description="Phosphoserine" evidence="2">
    <location>
        <position position="753"/>
    </location>
</feature>
<feature type="modified residue" description="Phosphoserine" evidence="3">
    <location>
        <position position="840"/>
    </location>
</feature>
<feature type="modified residue" description="Phosphoserine; by CHEK2" evidence="2">
    <location>
        <position position="988"/>
    </location>
</feature>
<feature type="modified residue" description="Phosphoserine" evidence="2">
    <location>
        <position position="1009"/>
    </location>
</feature>
<feature type="modified residue" description="Phosphoserine" evidence="2">
    <location>
        <position position="1143"/>
    </location>
</feature>
<feature type="modified residue" description="Phosphoserine" evidence="2">
    <location>
        <position position="1189"/>
    </location>
</feature>
<feature type="modified residue" description="Phosphoserine" evidence="2">
    <location>
        <position position="1191"/>
    </location>
</feature>
<feature type="modified residue" description="Phosphoserine" evidence="2">
    <location>
        <position position="1211"/>
    </location>
</feature>
<feature type="modified residue" description="Phosphoserine" evidence="2">
    <location>
        <position position="1217"/>
    </location>
</feature>
<feature type="modified residue" description="Phosphoserine" evidence="2">
    <location>
        <position position="1218"/>
    </location>
</feature>
<feature type="modified residue" description="Phosphoserine" evidence="2">
    <location>
        <position position="1280"/>
    </location>
</feature>
<feature type="modified residue" description="Phosphoserine" evidence="2">
    <location>
        <position position="1328"/>
    </location>
</feature>
<feature type="modified residue" description="Phosphoserine" evidence="2">
    <location>
        <position position="1336"/>
    </location>
</feature>
<feature type="modified residue" description="Phosphoserine" evidence="2">
    <location>
        <position position="1342"/>
    </location>
</feature>
<feature type="modified residue" description="Phosphoserine" evidence="2">
    <location>
        <position position="1387"/>
    </location>
</feature>
<feature type="modified residue" description="Phosphothreonine" evidence="2">
    <location>
        <position position="1394"/>
    </location>
</feature>
<feature type="modified residue" description="Phosphoserine" evidence="2">
    <location>
        <position position="1423"/>
    </location>
</feature>
<feature type="modified residue" description="Phosphoserine" evidence="2">
    <location>
        <position position="1457"/>
    </location>
</feature>
<feature type="modified residue" description="Phosphoserine" evidence="2">
    <location>
        <position position="1524"/>
    </location>
</feature>
<feature type="modified residue" description="Phosphoserine" evidence="2">
    <location>
        <position position="1542"/>
    </location>
</feature>
<feature type="cross-link" description="Glycyl lysine isopeptide (Lys-Gly) (interchain with G-Cter in SUMO2)" evidence="2">
    <location>
        <position position="109"/>
    </location>
</feature>
<feature type="cross-link" description="Glycyl lysine isopeptide (Lys-Gly) (interchain with G-Cter in SUMO2)" evidence="2">
    <location>
        <position position="301"/>
    </location>
</feature>
<feature type="cross-link" description="Glycyl lysine isopeptide (Lys-Gly) (interchain with G-Cter in SUMO2)" evidence="2">
    <location>
        <position position="339"/>
    </location>
</feature>
<feature type="cross-link" description="Glycyl lysine isopeptide (Lys-Gly) (interchain with G-Cter in SUMO2)" evidence="2">
    <location>
        <position position="443"/>
    </location>
</feature>
<feature type="cross-link" description="Glycyl lysine isopeptide (Lys-Gly) (interchain with G-Cter in SUMO2)" evidence="2">
    <location>
        <position position="459"/>
    </location>
</feature>
<feature type="cross-link" description="Glycyl lysine isopeptide (Lys-Gly) (interchain with G-Cter in SUMO2)" evidence="2">
    <location>
        <position position="519"/>
    </location>
</feature>
<feature type="cross-link" description="Glycyl lysine isopeptide (Lys-Gly) (interchain with G-Cter in SUMO2)" evidence="2">
    <location>
        <position position="583"/>
    </location>
</feature>
<feature type="cross-link" description="Glycyl lysine isopeptide (Lys-Gly) (interchain with G-Cter in SUMO2)" evidence="2">
    <location>
        <position position="654"/>
    </location>
</feature>
<feature type="cross-link" description="Glycyl lysine isopeptide (Lys-Gly) (interchain with G-Cter in SUMO2)" evidence="2">
    <location>
        <position position="734"/>
    </location>
</feature>
<feature type="cross-link" description="Glycyl lysine isopeptide (Lys-Gly) (interchain with G-Cter in SUMO2)" evidence="2">
    <location>
        <position position="739"/>
    </location>
</feature>
<feature type="cross-link" description="Glycyl lysine isopeptide (Lys-Gly) (interchain with G-Cter in SUMO2)" evidence="2">
    <location>
        <position position="918"/>
    </location>
</feature>
<feature type="cross-link" description="Glycyl lysine isopeptide (Lys-Gly) (interchain with G-Cter in SUMO2)" evidence="2">
    <location>
        <position position="987"/>
    </location>
</feature>
<feature type="cross-link" description="Glycyl lysine isopeptide (Lys-Gly) (interchain with G-Cter in SUMO2)" evidence="2">
    <location>
        <position position="1079"/>
    </location>
</feature>
<feature type="sequence variant" id="VAR_018712" evidence="8">
    <original>K</original>
    <variation>E</variation>
    <location>
        <position position="309"/>
    </location>
</feature>
<feature type="sequence variant" id="VAR_018713" evidence="8">
    <original>S</original>
    <variation>G</variation>
    <location>
        <position position="590"/>
    </location>
</feature>
<feature type="sequence variant" id="VAR_018714" evidence="7 8">
    <original>K</original>
    <variation>E</variation>
    <location>
        <position position="731"/>
    </location>
</feature>
<feature type="sequence variant" id="VAR_018715" evidence="7 8">
    <original>G</original>
    <variation>E</variation>
    <location>
        <position position="1100"/>
    </location>
</feature>
<feature type="sequence conflict" description="In Ref. 2; AAR04849." evidence="9" ref="2">
    <original>E</original>
    <variation>K</variation>
    <location>
        <position position="427"/>
    </location>
</feature>
<feature type="sequence conflict" description="In Ref. 2; AAR04849." evidence="9" ref="2">
    <original>I</original>
    <variation>T</variation>
    <location>
        <position position="925"/>
    </location>
</feature>
<feature type="sequence conflict" description="In Ref. 1; AAG43492." evidence="9" ref="1">
    <original>R</original>
    <variation>T</variation>
    <location>
        <position position="1520"/>
    </location>
</feature>
<name>BRCA1_PANTR</name>
<evidence type="ECO:0000250" key="1"/>
<evidence type="ECO:0000250" key="2">
    <source>
        <dbReference type="UniProtKB" id="P38398"/>
    </source>
</evidence>
<evidence type="ECO:0000250" key="3">
    <source>
        <dbReference type="UniProtKB" id="P48754"/>
    </source>
</evidence>
<evidence type="ECO:0000255" key="4">
    <source>
        <dbReference type="PROSITE-ProRule" id="PRU00033"/>
    </source>
</evidence>
<evidence type="ECO:0000255" key="5">
    <source>
        <dbReference type="PROSITE-ProRule" id="PRU00175"/>
    </source>
</evidence>
<evidence type="ECO:0000256" key="6">
    <source>
        <dbReference type="SAM" id="MobiDB-lite"/>
    </source>
</evidence>
<evidence type="ECO:0000269" key="7">
    <source>
    </source>
</evidence>
<evidence type="ECO:0000269" key="8">
    <source ref="1"/>
</evidence>
<evidence type="ECO:0000305" key="9"/>
<sequence length="1863" mass="207899">MDLSALRVEEVQNVINAMQKILECPICLELIKEPVSTKCDHIFCKFCMLKLLNQKKGPSQCPLCKNDITKRSLQESTRFSQLVEELLKIICAFQLDTGLEYANSYNFAKKENNSPEHLKDEVSIIQSMGYRNRAKRLLQSEPENPSLQETSLSVQLSNLGTVRTLRTKQRIQPQKKSVYIELGSDSSEDTVNKATYCSVGDQELLQITPQGTRDEISLDSAKKAACEFSETDVTNTEHHQPSNNDLNTTEKRATERHPEKYQGSSVSNLHVEPCGTNTHASSLQHENSSLLLTKDRMNVEKAEFCNKSKQPGLARSQHNRWAGSKETCNDRRTPSTEKKVDLNADPLCERKEWNKQKLPCSENPRDTEDVPWITLNSSIQKVNEWFSRSDELLGSDDSHDGGSESNAKVADVLDVLNEVDEYSGSSEKIDLLASDPHEALICKSERVHSKSVESNTEDKIFGKTYRRKASLPNLSHVTENLIIGAFVTEPQIIQERPLTNKLKRKRRATSGLHPEDFIKKADLAVQKTPEMINQGTNQMEQNGQVMNITNSGHENKTKGDSIQNEKNPNPIESLEKESAFKTKAEPISSSISNMELELNIHNSKAPKKNRLRRKSSTRHIHALELVVSRNLSPPNCTELQIDSCSSSEEIKKKKYNQMPVRHSRNLQLMEDKEPATGVKKSNKPNEQTSKRHDSDTFPELKLTNAPGSFTNCSNTSELKEFVNPSLPREEKEEKLETVKVSNNAEDPKDLMLSGERVLQTERSVESSSISLVPGTDYGTQESISLLEVSTLGKAKTEPNKCVSQCAAFENPKGLIHGCSKDTRNDTEGFKYPLGHEVNHSRETSIEMEESELDAQYLQNTFKVSKRQSFALFSNPGNPEEECATFSAHCRSLKKQSPKVTFEREQKEQNQGKNESNIKPVQTVNITAGFPVVCQKDKPVDYAKCSIKGGSRFCLSSQFRGNETGLITPNKHGLLQNPYHIPPLFPIKSFVKTKCKKNLLEENFEEHSMSPEREMGNENIPSTVSTISRNNIRENVFKEASSSNINEVGSSTNEVGSSINEVGSSDENIQAELGRNRGPKLNAMLRLGVLQPEVYKQSLPGSNCKHPEIKKQEYEEVVQTVNTDFSPCLISDNLEQPMGSSHASQVCSETPDDLLDDGEIKEDTSFAENDIKESSAVFSKSVQRGELSRSPSPFTHTHLAQGYRRGAKKLESSEENLSSEDEELPCFQHLLFGKVSNIPSQSTRHSTVATECLSKNTEENLLSLKNSLNDCSNQVILAKASQEHHLSEETKCSASLFSSQCSELEDLTANTNTQDPFLIGSSKQMRHQSESQGVGLSDKELVSDDEERGTGLEENNQEEQSMDSNLGEAASGCESETSVSEDCSGLSSQSDILTTQQRDTMQDNLIKLQQEMAELEAVLEQHGSQPSNSYPSIISDSSALEDLQNPEQSTSEKAVLTSQKSSEYPISQNPEGLSADKFEVSADSSTSKNKEPGVERSSPSKCPSLDDRWYMHSCSGSLQNRNYPSQEELIKVVDVEEQQLEESGPHDLTETSYLPRQDLEGTPYLESGISLFSDDPESDPSEDKAPESAHVGNIPSSTSALKVPQLKVAESAQSPAAAHTTNTAGYNAMEESVSREKPELTASTERVNKRMSMVVSGLTPEEFMLVYKFARKHHITLTNLITEETTHVVMKTDAEFVCERTLKYFLGIAGGKWVVSYFWVTQSIKERKMLNEHDFEVRGDVVNGRNHQGPKRARESQDRKIFRGLEICCYGPFTNMPTDQLEWMVQLCGASVVKELSSFTLGTGVHPIVVVQPDAWTEDNGFHAIGQMCEAPVVTREWVLDSVALYQCQELDTYLIPQIPHSHY</sequence>
<dbReference type="EC" id="2.3.2.27" evidence="2"/>
<dbReference type="EMBL" id="AF207822">
    <property type="protein sequence ID" value="AAG43492.1"/>
    <property type="molecule type" value="mRNA"/>
</dbReference>
<dbReference type="EMBL" id="AY365046">
    <property type="protein sequence ID" value="AAR04849.1"/>
    <property type="molecule type" value="Genomic_DNA"/>
</dbReference>
<dbReference type="EMBL" id="AF019075">
    <property type="protein sequence ID" value="AAC39583.1"/>
    <property type="molecule type" value="Genomic_DNA"/>
</dbReference>
<dbReference type="RefSeq" id="NP_001038958.1">
    <property type="nucleotide sequence ID" value="NM_001045493.1"/>
</dbReference>
<dbReference type="BMRB" id="Q9GKK8"/>
<dbReference type="SMR" id="Q9GKK8"/>
<dbReference type="FunCoup" id="Q9GKK8">
    <property type="interactions" value="1565"/>
</dbReference>
<dbReference type="STRING" id="9598.ENSPTRP00000070120"/>
<dbReference type="PaxDb" id="9598-ENSPTRP00000015727"/>
<dbReference type="GeneID" id="449497"/>
<dbReference type="KEGG" id="ptr:449497"/>
<dbReference type="CTD" id="672"/>
<dbReference type="eggNOG" id="KOG4362">
    <property type="taxonomic scope" value="Eukaryota"/>
</dbReference>
<dbReference type="InParanoid" id="Q9GKK8"/>
<dbReference type="OrthoDB" id="9883at9604"/>
<dbReference type="Proteomes" id="UP000002277">
    <property type="component" value="Unplaced"/>
</dbReference>
<dbReference type="GO" id="GO:0070531">
    <property type="term" value="C:BRCA1-A complex"/>
    <property type="evidence" value="ECO:0000318"/>
    <property type="project" value="GO_Central"/>
</dbReference>
<dbReference type="GO" id="GO:0031436">
    <property type="term" value="C:BRCA1-BARD1 complex"/>
    <property type="evidence" value="ECO:0000250"/>
    <property type="project" value="UniProtKB"/>
</dbReference>
<dbReference type="GO" id="GO:0005694">
    <property type="term" value="C:chromosome"/>
    <property type="evidence" value="ECO:0000250"/>
    <property type="project" value="UniProtKB"/>
</dbReference>
<dbReference type="GO" id="GO:0005737">
    <property type="term" value="C:cytoplasm"/>
    <property type="evidence" value="ECO:0000250"/>
    <property type="project" value="UniProtKB"/>
</dbReference>
<dbReference type="GO" id="GO:0000931">
    <property type="term" value="C:gamma-tubulin ring complex"/>
    <property type="evidence" value="ECO:0000303"/>
    <property type="project" value="UniProtKB"/>
</dbReference>
<dbReference type="GO" id="GO:0005634">
    <property type="term" value="C:nucleus"/>
    <property type="evidence" value="ECO:0000250"/>
    <property type="project" value="UniProtKB"/>
</dbReference>
<dbReference type="GO" id="GO:0003677">
    <property type="term" value="F:DNA binding"/>
    <property type="evidence" value="ECO:0007669"/>
    <property type="project" value="UniProtKB-KW"/>
</dbReference>
<dbReference type="GO" id="GO:0070063">
    <property type="term" value="F:RNA polymerase binding"/>
    <property type="evidence" value="ECO:0000250"/>
    <property type="project" value="UniProtKB"/>
</dbReference>
<dbReference type="GO" id="GO:0003713">
    <property type="term" value="F:transcription coactivator activity"/>
    <property type="evidence" value="ECO:0000250"/>
    <property type="project" value="UniProtKB"/>
</dbReference>
<dbReference type="GO" id="GO:0015631">
    <property type="term" value="F:tubulin binding"/>
    <property type="evidence" value="ECO:0000303"/>
    <property type="project" value="UniProtKB"/>
</dbReference>
<dbReference type="GO" id="GO:0004842">
    <property type="term" value="F:ubiquitin-protein transferase activity"/>
    <property type="evidence" value="ECO:0000250"/>
    <property type="project" value="UniProtKB"/>
</dbReference>
<dbReference type="GO" id="GO:0008270">
    <property type="term" value="F:zinc ion binding"/>
    <property type="evidence" value="ECO:0007669"/>
    <property type="project" value="UniProtKB-KW"/>
</dbReference>
<dbReference type="GO" id="GO:0043009">
    <property type="term" value="P:chordate embryonic development"/>
    <property type="evidence" value="ECO:0000318"/>
    <property type="project" value="GO_Central"/>
</dbReference>
<dbReference type="GO" id="GO:0000724">
    <property type="term" value="P:double-strand break repair via homologous recombination"/>
    <property type="evidence" value="ECO:0000318"/>
    <property type="project" value="GO_Central"/>
</dbReference>
<dbReference type="GO" id="GO:0006633">
    <property type="term" value="P:fatty acid biosynthetic process"/>
    <property type="evidence" value="ECO:0007669"/>
    <property type="project" value="UniProtKB-KW"/>
</dbReference>
<dbReference type="GO" id="GO:0007095">
    <property type="term" value="P:mitotic G2 DNA damage checkpoint signaling"/>
    <property type="evidence" value="ECO:0000318"/>
    <property type="project" value="GO_Central"/>
</dbReference>
<dbReference type="GO" id="GO:0046600">
    <property type="term" value="P:negative regulation of centriole replication"/>
    <property type="evidence" value="ECO:0000303"/>
    <property type="project" value="UniProtKB"/>
</dbReference>
<dbReference type="GO" id="GO:0045717">
    <property type="term" value="P:negative regulation of fatty acid biosynthetic process"/>
    <property type="evidence" value="ECO:0000250"/>
    <property type="project" value="UniProtKB"/>
</dbReference>
<dbReference type="GO" id="GO:0045739">
    <property type="term" value="P:positive regulation of DNA repair"/>
    <property type="evidence" value="ECO:0000303"/>
    <property type="project" value="UniProtKB"/>
</dbReference>
<dbReference type="GO" id="GO:0045893">
    <property type="term" value="P:positive regulation of DNA-templated transcription"/>
    <property type="evidence" value="ECO:0000250"/>
    <property type="project" value="UniProtKB"/>
</dbReference>
<dbReference type="GO" id="GO:0045944">
    <property type="term" value="P:positive regulation of transcription by RNA polymerase II"/>
    <property type="evidence" value="ECO:0000318"/>
    <property type="project" value="GO_Central"/>
</dbReference>
<dbReference type="GO" id="GO:0051865">
    <property type="term" value="P:protein autoubiquitination"/>
    <property type="evidence" value="ECO:0000250"/>
    <property type="project" value="UniProtKB"/>
</dbReference>
<dbReference type="GO" id="GO:0085020">
    <property type="term" value="P:protein K6-linked ubiquitination"/>
    <property type="evidence" value="ECO:0000250"/>
    <property type="project" value="UniProtKB"/>
</dbReference>
<dbReference type="GO" id="GO:0006357">
    <property type="term" value="P:regulation of transcription by RNA polymerase II"/>
    <property type="evidence" value="ECO:0000250"/>
    <property type="project" value="UniProtKB"/>
</dbReference>
<dbReference type="GO" id="GO:0007549">
    <property type="term" value="P:sex-chromosome dosage compensation"/>
    <property type="evidence" value="ECO:0000318"/>
    <property type="project" value="GO_Central"/>
</dbReference>
<dbReference type="CDD" id="cd17735">
    <property type="entry name" value="BRCT_BRCA1_rpt1"/>
    <property type="match status" value="1"/>
</dbReference>
<dbReference type="CDD" id="cd17721">
    <property type="entry name" value="BRCT_BRCA1_rpt2"/>
    <property type="match status" value="1"/>
</dbReference>
<dbReference type="CDD" id="cd16498">
    <property type="entry name" value="RING-HC_BRCA1"/>
    <property type="match status" value="1"/>
</dbReference>
<dbReference type="FunFam" id="3.30.40.10:FF:000213">
    <property type="entry name" value="Breast cancer type 1 susceptibility protein homolog"/>
    <property type="match status" value="1"/>
</dbReference>
<dbReference type="FunFam" id="3.40.50.10190:FF:000006">
    <property type="entry name" value="Breast cancer type 1 susceptibility protein homolog"/>
    <property type="match status" value="1"/>
</dbReference>
<dbReference type="FunFam" id="3.40.50.10190:FF:000025">
    <property type="entry name" value="Breast cancer type 1 susceptibility protein homolog"/>
    <property type="match status" value="1"/>
</dbReference>
<dbReference type="Gene3D" id="3.40.50.10190">
    <property type="entry name" value="BRCT domain"/>
    <property type="match status" value="2"/>
</dbReference>
<dbReference type="Gene3D" id="3.30.40.10">
    <property type="entry name" value="Zinc/RING finger domain, C3HC4 (zinc finger)"/>
    <property type="match status" value="1"/>
</dbReference>
<dbReference type="InterPro" id="IPR011364">
    <property type="entry name" value="BRCA1"/>
</dbReference>
<dbReference type="InterPro" id="IPR031099">
    <property type="entry name" value="BRCA1-associated"/>
</dbReference>
<dbReference type="InterPro" id="IPR025994">
    <property type="entry name" value="BRCA1_serine_dom"/>
</dbReference>
<dbReference type="InterPro" id="IPR001357">
    <property type="entry name" value="BRCT_dom"/>
</dbReference>
<dbReference type="InterPro" id="IPR036420">
    <property type="entry name" value="BRCT_dom_sf"/>
</dbReference>
<dbReference type="InterPro" id="IPR018957">
    <property type="entry name" value="Znf_C3HC4_RING-type"/>
</dbReference>
<dbReference type="InterPro" id="IPR001841">
    <property type="entry name" value="Znf_RING"/>
</dbReference>
<dbReference type="InterPro" id="IPR013083">
    <property type="entry name" value="Znf_RING/FYVE/PHD"/>
</dbReference>
<dbReference type="InterPro" id="IPR017907">
    <property type="entry name" value="Znf_RING_CS"/>
</dbReference>
<dbReference type="PANTHER" id="PTHR13763:SF0">
    <property type="entry name" value="BREAST CANCER TYPE 1 SUSCEPTIBILITY PROTEIN"/>
    <property type="match status" value="1"/>
</dbReference>
<dbReference type="PANTHER" id="PTHR13763">
    <property type="entry name" value="BREAST CANCER TYPE 1 SUSCEPTIBILITY PROTEIN BRCA1"/>
    <property type="match status" value="1"/>
</dbReference>
<dbReference type="Pfam" id="PF00533">
    <property type="entry name" value="BRCT"/>
    <property type="match status" value="2"/>
</dbReference>
<dbReference type="Pfam" id="PF12820">
    <property type="entry name" value="BRCT_assoc"/>
    <property type="match status" value="1"/>
</dbReference>
<dbReference type="Pfam" id="PF00097">
    <property type="entry name" value="zf-C3HC4"/>
    <property type="match status" value="1"/>
</dbReference>
<dbReference type="PIRSF" id="PIRSF001734">
    <property type="entry name" value="BRCA1"/>
    <property type="match status" value="1"/>
</dbReference>
<dbReference type="PRINTS" id="PR00493">
    <property type="entry name" value="BRSTCANCERI"/>
</dbReference>
<dbReference type="SMART" id="SM00292">
    <property type="entry name" value="BRCT"/>
    <property type="match status" value="2"/>
</dbReference>
<dbReference type="SMART" id="SM00184">
    <property type="entry name" value="RING"/>
    <property type="match status" value="1"/>
</dbReference>
<dbReference type="SUPFAM" id="SSF52113">
    <property type="entry name" value="BRCT domain"/>
    <property type="match status" value="2"/>
</dbReference>
<dbReference type="SUPFAM" id="SSF57850">
    <property type="entry name" value="RING/U-box"/>
    <property type="match status" value="1"/>
</dbReference>
<dbReference type="PROSITE" id="PS50172">
    <property type="entry name" value="BRCT"/>
    <property type="match status" value="2"/>
</dbReference>
<dbReference type="PROSITE" id="PS00518">
    <property type="entry name" value="ZF_RING_1"/>
    <property type="match status" value="1"/>
</dbReference>
<dbReference type="PROSITE" id="PS50089">
    <property type="entry name" value="ZF_RING_2"/>
    <property type="match status" value="1"/>
</dbReference>
<keyword id="KW-0007">Acetylation</keyword>
<keyword id="KW-0010">Activator</keyword>
<keyword id="KW-0131">Cell cycle</keyword>
<keyword id="KW-0158">Chromosome</keyword>
<keyword id="KW-0963">Cytoplasm</keyword>
<keyword id="KW-0227">DNA damage</keyword>
<keyword id="KW-0233">DNA recombination</keyword>
<keyword id="KW-0234">DNA repair</keyword>
<keyword id="KW-0238">DNA-binding</keyword>
<keyword id="KW-0275">Fatty acid biosynthesis</keyword>
<keyword id="KW-0276">Fatty acid metabolism</keyword>
<keyword id="KW-1017">Isopeptide bond</keyword>
<keyword id="KW-0444">Lipid biosynthesis</keyword>
<keyword id="KW-0443">Lipid metabolism</keyword>
<keyword id="KW-0479">Metal-binding</keyword>
<keyword id="KW-0539">Nucleus</keyword>
<keyword id="KW-0597">Phosphoprotein</keyword>
<keyword id="KW-1185">Reference proteome</keyword>
<keyword id="KW-0677">Repeat</keyword>
<keyword id="KW-0804">Transcription</keyword>
<keyword id="KW-0805">Transcription regulation</keyword>
<keyword id="KW-0808">Transferase</keyword>
<keyword id="KW-0043">Tumor suppressor</keyword>
<keyword id="KW-0832">Ubl conjugation</keyword>
<keyword id="KW-0833">Ubl conjugation pathway</keyword>
<keyword id="KW-0862">Zinc</keyword>
<keyword id="KW-0863">Zinc-finger</keyword>